<dbReference type="EC" id="1.14.-.-"/>
<dbReference type="EMBL" id="AP001298">
    <property type="protein sequence ID" value="BAB02192.1"/>
    <property type="molecule type" value="Genomic_DNA"/>
</dbReference>
<dbReference type="EMBL" id="CP002686">
    <property type="protein sequence ID" value="AEE77145.1"/>
    <property type="molecule type" value="Genomic_DNA"/>
</dbReference>
<dbReference type="RefSeq" id="NP_189263.1">
    <property type="nucleotide sequence ID" value="NM_113539.2"/>
</dbReference>
<dbReference type="SMR" id="Q9LIP4"/>
<dbReference type="FunCoup" id="Q9LIP4">
    <property type="interactions" value="394"/>
</dbReference>
<dbReference type="PaxDb" id="3702-AT3G26320.1"/>
<dbReference type="ProteomicsDB" id="239209"/>
<dbReference type="EnsemblPlants" id="AT3G26320.1">
    <property type="protein sequence ID" value="AT3G26320.1"/>
    <property type="gene ID" value="AT3G26320"/>
</dbReference>
<dbReference type="GeneID" id="822236"/>
<dbReference type="Gramene" id="AT3G26320.1">
    <property type="protein sequence ID" value="AT3G26320.1"/>
    <property type="gene ID" value="AT3G26320"/>
</dbReference>
<dbReference type="KEGG" id="ath:AT3G26320"/>
<dbReference type="Araport" id="AT3G26320"/>
<dbReference type="TAIR" id="AT3G26320">
    <property type="gene designation" value="CYP71B36"/>
</dbReference>
<dbReference type="eggNOG" id="KOG0156">
    <property type="taxonomic scope" value="Eukaryota"/>
</dbReference>
<dbReference type="HOGENOM" id="CLU_001570_4_1_1"/>
<dbReference type="InParanoid" id="Q9LIP4"/>
<dbReference type="OMA" id="RVDKYEW"/>
<dbReference type="PhylomeDB" id="Q9LIP4"/>
<dbReference type="BioCyc" id="ARA:AT3G26320-MONOMER"/>
<dbReference type="PRO" id="PR:Q9LIP4"/>
<dbReference type="Proteomes" id="UP000006548">
    <property type="component" value="Chromosome 3"/>
</dbReference>
<dbReference type="ExpressionAtlas" id="Q9LIP4">
    <property type="expression patterns" value="baseline and differential"/>
</dbReference>
<dbReference type="GO" id="GO:0016020">
    <property type="term" value="C:membrane"/>
    <property type="evidence" value="ECO:0007669"/>
    <property type="project" value="UniProtKB-SubCell"/>
</dbReference>
<dbReference type="GO" id="GO:0020037">
    <property type="term" value="F:heme binding"/>
    <property type="evidence" value="ECO:0007669"/>
    <property type="project" value="InterPro"/>
</dbReference>
<dbReference type="GO" id="GO:0005506">
    <property type="term" value="F:iron ion binding"/>
    <property type="evidence" value="ECO:0007669"/>
    <property type="project" value="InterPro"/>
</dbReference>
<dbReference type="GO" id="GO:0004497">
    <property type="term" value="F:monooxygenase activity"/>
    <property type="evidence" value="ECO:0007669"/>
    <property type="project" value="UniProtKB-KW"/>
</dbReference>
<dbReference type="GO" id="GO:0016705">
    <property type="term" value="F:oxidoreductase activity, acting on paired donors, with incorporation or reduction of molecular oxygen"/>
    <property type="evidence" value="ECO:0007669"/>
    <property type="project" value="InterPro"/>
</dbReference>
<dbReference type="CDD" id="cd11072">
    <property type="entry name" value="CYP71-like"/>
    <property type="match status" value="1"/>
</dbReference>
<dbReference type="FunFam" id="1.10.630.10:FF:000011">
    <property type="entry name" value="Cytochrome P450 83B1"/>
    <property type="match status" value="1"/>
</dbReference>
<dbReference type="Gene3D" id="1.10.630.10">
    <property type="entry name" value="Cytochrome P450"/>
    <property type="match status" value="1"/>
</dbReference>
<dbReference type="InterPro" id="IPR001128">
    <property type="entry name" value="Cyt_P450"/>
</dbReference>
<dbReference type="InterPro" id="IPR017972">
    <property type="entry name" value="Cyt_P450_CS"/>
</dbReference>
<dbReference type="InterPro" id="IPR002401">
    <property type="entry name" value="Cyt_P450_E_grp-I"/>
</dbReference>
<dbReference type="InterPro" id="IPR036396">
    <property type="entry name" value="Cyt_P450_sf"/>
</dbReference>
<dbReference type="PANTHER" id="PTHR47955:SF19">
    <property type="entry name" value="CYTOCHROME P450 71A9-LIKE ISOFORM X1"/>
    <property type="match status" value="1"/>
</dbReference>
<dbReference type="PANTHER" id="PTHR47955">
    <property type="entry name" value="CYTOCHROME P450 FAMILY 71 PROTEIN"/>
    <property type="match status" value="1"/>
</dbReference>
<dbReference type="Pfam" id="PF00067">
    <property type="entry name" value="p450"/>
    <property type="match status" value="1"/>
</dbReference>
<dbReference type="PRINTS" id="PR00463">
    <property type="entry name" value="EP450I"/>
</dbReference>
<dbReference type="PRINTS" id="PR00385">
    <property type="entry name" value="P450"/>
</dbReference>
<dbReference type="SUPFAM" id="SSF48264">
    <property type="entry name" value="Cytochrome P450"/>
    <property type="match status" value="1"/>
</dbReference>
<dbReference type="PROSITE" id="PS00086">
    <property type="entry name" value="CYTOCHROME_P450"/>
    <property type="match status" value="1"/>
</dbReference>
<proteinExistence type="inferred from homology"/>
<comment type="cofactor">
    <cofactor evidence="1">
        <name>heme</name>
        <dbReference type="ChEBI" id="CHEBI:30413"/>
    </cofactor>
</comment>
<comment type="subcellular location">
    <subcellularLocation>
        <location evidence="3">Membrane</location>
        <topology evidence="3">Single-pass membrane protein</topology>
    </subcellularLocation>
</comment>
<comment type="similarity">
    <text evidence="3">Belongs to the cytochrome P450 family.</text>
</comment>
<name>C71BX_ARATH</name>
<sequence>MATILFLSLLFLSCILLAAFTHKKRQQHQRKPPSPPGFPIIGNLHQLGELPHQSLWRLSKKYGHVMLLKFGSIPTVVVSSSETAKQVLKIHDLHCCSRPSLAGPRALSYNYLDIAFSPFDDYWKELRRICVQELFSVKRVQSFQPIKEDEVKKLIDSVSESASQGTPVNLSEKFTSLTVRVTCKATFGVNFQGTVLNSDRFEKLIHDTYLFLGSFSASDYFPNGGWIIDWLTGLHGQRERSVRALDAFYEQMFDLHKQGNKEGVEDFVDLLLRLEKEETVIGYGKLTRNHIKAILMNVLIGGIGTSAITMTWAMTELMRNPRVMKKVQSEIRNQIGKKSMITLDDIDQLHYLKMVINETWRLHPPSPFLIPRQVMSEFELNDYVIPVKTRLYVNVWAIGRDPDTWKDPEEFLPERFVNSSIDAKGQHFELLPFGSGRRMCPAMYMGTTMVEFGLANMLYHFDWKIPVGMVAEDIDLEESPGLNASKKNELVLVPLKYLDH</sequence>
<keyword id="KW-0349">Heme</keyword>
<keyword id="KW-0408">Iron</keyword>
<keyword id="KW-0472">Membrane</keyword>
<keyword id="KW-0479">Metal-binding</keyword>
<keyword id="KW-0503">Monooxygenase</keyword>
<keyword id="KW-0560">Oxidoreductase</keyword>
<keyword id="KW-1185">Reference proteome</keyword>
<keyword id="KW-0812">Transmembrane</keyword>
<keyword id="KW-1133">Transmembrane helix</keyword>
<accession>Q9LIP4</accession>
<feature type="chain" id="PRO_0000052110" description="Cytochrome P450 71B36">
    <location>
        <begin position="1"/>
        <end position="500"/>
    </location>
</feature>
<feature type="transmembrane region" description="Helical" evidence="2">
    <location>
        <begin position="1"/>
        <end position="21"/>
    </location>
</feature>
<feature type="binding site" description="axial binding residue" evidence="1">
    <location>
        <position position="440"/>
    </location>
    <ligand>
        <name>heme</name>
        <dbReference type="ChEBI" id="CHEBI:30413"/>
    </ligand>
    <ligandPart>
        <name>Fe</name>
        <dbReference type="ChEBI" id="CHEBI:18248"/>
    </ligandPart>
</feature>
<protein>
    <recommendedName>
        <fullName>Cytochrome P450 71B36</fullName>
        <ecNumber>1.14.-.-</ecNumber>
    </recommendedName>
</protein>
<evidence type="ECO:0000250" key="1"/>
<evidence type="ECO:0000255" key="2"/>
<evidence type="ECO:0000305" key="3"/>
<gene>
    <name type="primary">CYP71B36</name>
    <name type="ordered locus">At3g26320</name>
    <name type="ORF">F20C19.4</name>
</gene>
<organism>
    <name type="scientific">Arabidopsis thaliana</name>
    <name type="common">Mouse-ear cress</name>
    <dbReference type="NCBI Taxonomy" id="3702"/>
    <lineage>
        <taxon>Eukaryota</taxon>
        <taxon>Viridiplantae</taxon>
        <taxon>Streptophyta</taxon>
        <taxon>Embryophyta</taxon>
        <taxon>Tracheophyta</taxon>
        <taxon>Spermatophyta</taxon>
        <taxon>Magnoliopsida</taxon>
        <taxon>eudicotyledons</taxon>
        <taxon>Gunneridae</taxon>
        <taxon>Pentapetalae</taxon>
        <taxon>rosids</taxon>
        <taxon>malvids</taxon>
        <taxon>Brassicales</taxon>
        <taxon>Brassicaceae</taxon>
        <taxon>Camelineae</taxon>
        <taxon>Arabidopsis</taxon>
    </lineage>
</organism>
<reference key="1">
    <citation type="journal article" date="2000" name="DNA Res.">
        <title>Structural analysis of Arabidopsis thaliana chromosome 3. II. Sequence features of the 4,251,695 bp regions covered by 90 P1, TAC and BAC clones.</title>
        <authorList>
            <person name="Kaneko T."/>
            <person name="Katoh T."/>
            <person name="Sato S."/>
            <person name="Nakamura Y."/>
            <person name="Asamizu E."/>
            <person name="Tabata S."/>
        </authorList>
    </citation>
    <scope>NUCLEOTIDE SEQUENCE [LARGE SCALE GENOMIC DNA]</scope>
    <source>
        <strain>cv. Columbia</strain>
    </source>
</reference>
<reference key="2">
    <citation type="journal article" date="2017" name="Plant J.">
        <title>Araport11: a complete reannotation of the Arabidopsis thaliana reference genome.</title>
        <authorList>
            <person name="Cheng C.Y."/>
            <person name="Krishnakumar V."/>
            <person name="Chan A.P."/>
            <person name="Thibaud-Nissen F."/>
            <person name="Schobel S."/>
            <person name="Town C.D."/>
        </authorList>
    </citation>
    <scope>GENOME REANNOTATION</scope>
    <source>
        <strain>cv. Columbia</strain>
    </source>
</reference>